<comment type="function">
    <text evidence="1">Catalyzes the methylation of C-1 in cobalt-precorrin-5B to form cobalt-precorrin-6A.</text>
</comment>
<comment type="catalytic activity">
    <reaction evidence="1">
        <text>Co-precorrin-5B + S-adenosyl-L-methionine = Co-precorrin-6A + S-adenosyl-L-homocysteine</text>
        <dbReference type="Rhea" id="RHEA:26285"/>
        <dbReference type="ChEBI" id="CHEBI:57856"/>
        <dbReference type="ChEBI" id="CHEBI:59789"/>
        <dbReference type="ChEBI" id="CHEBI:60063"/>
        <dbReference type="ChEBI" id="CHEBI:60064"/>
        <dbReference type="EC" id="2.1.1.195"/>
    </reaction>
</comment>
<comment type="pathway">
    <text evidence="1">Cofactor biosynthesis; adenosylcobalamin biosynthesis; cob(II)yrinate a,c-diamide from sirohydrochlorin (anaerobic route): step 6/10.</text>
</comment>
<comment type="similarity">
    <text evidence="1">Belongs to the CbiD family.</text>
</comment>
<accession>Q2YQL5</accession>
<reference key="1">
    <citation type="journal article" date="2005" name="Infect. Immun.">
        <title>Whole-genome analyses of speciation events in pathogenic Brucellae.</title>
        <authorList>
            <person name="Chain P.S."/>
            <person name="Comerci D.J."/>
            <person name="Tolmasky M.E."/>
            <person name="Larimer F.W."/>
            <person name="Malfatti S.A."/>
            <person name="Vergez L.M."/>
            <person name="Aguero F."/>
            <person name="Land M.L."/>
            <person name="Ugalde R.A."/>
            <person name="Garcia E."/>
        </authorList>
    </citation>
    <scope>NUCLEOTIDE SEQUENCE [LARGE SCALE GENOMIC DNA]</scope>
    <source>
        <strain>2308</strain>
    </source>
</reference>
<name>CBID_BRUA2</name>
<feature type="chain" id="PRO_0000257749" description="Cobalt-precorrin-5B C(1)-methyltransferase">
    <location>
        <begin position="1"/>
        <end position="368"/>
    </location>
</feature>
<gene>
    <name evidence="1" type="primary">cbiD</name>
    <name type="ordered locus">BAB1_1318</name>
</gene>
<proteinExistence type="inferred from homology"/>
<sequence length="368" mass="38530">MNDETTPANKNPEKAELRCGWTTGACATAATKAALTALITGEFPDPVGIILPKGEVPYFQLAYEGLGEGYAMAGIVKDAGDDPDVTHGATIISTVYPAPPGTGIIFRAGEGVGTVTREGLAIPPGEAAINPVPRRMMTEICEAICAEYGLPADLVITISVPGGEEIAQKTWNPRLGIIGGISILGTTGVVHPFSCSAWIHSIHRGIDVARAAGQKHVLGATGSTSEDAAQALYNLPDFAILDMGDFAGGVLKYLREHPIDRLTIAGGFAKLTKLAQGALDLHSSRSQVDKGFLWQIAERAGAPAGMKERILLANTAMEVLELTQSIGIDIAGPIALEARQTALKTLRGAPVEVEIIVTDRKGNILARV</sequence>
<keyword id="KW-0169">Cobalamin biosynthesis</keyword>
<keyword id="KW-0489">Methyltransferase</keyword>
<keyword id="KW-1185">Reference proteome</keyword>
<keyword id="KW-0949">S-adenosyl-L-methionine</keyword>
<keyword id="KW-0808">Transferase</keyword>
<protein>
    <recommendedName>
        <fullName evidence="1">Cobalt-precorrin-5B C(1)-methyltransferase</fullName>
        <ecNumber evidence="1">2.1.1.195</ecNumber>
    </recommendedName>
    <alternativeName>
        <fullName evidence="1">Cobalt-precorrin-6A synthase</fullName>
    </alternativeName>
</protein>
<organism>
    <name type="scientific">Brucella abortus (strain 2308)</name>
    <dbReference type="NCBI Taxonomy" id="359391"/>
    <lineage>
        <taxon>Bacteria</taxon>
        <taxon>Pseudomonadati</taxon>
        <taxon>Pseudomonadota</taxon>
        <taxon>Alphaproteobacteria</taxon>
        <taxon>Hyphomicrobiales</taxon>
        <taxon>Brucellaceae</taxon>
        <taxon>Brucella/Ochrobactrum group</taxon>
        <taxon>Brucella</taxon>
    </lineage>
</organism>
<evidence type="ECO:0000255" key="1">
    <source>
        <dbReference type="HAMAP-Rule" id="MF_00787"/>
    </source>
</evidence>
<dbReference type="EC" id="2.1.1.195" evidence="1"/>
<dbReference type="EMBL" id="AM040264">
    <property type="protein sequence ID" value="CAJ11274.1"/>
    <property type="molecule type" value="Genomic_DNA"/>
</dbReference>
<dbReference type="RefSeq" id="WP_002964416.1">
    <property type="nucleotide sequence ID" value="NZ_KN046823.1"/>
</dbReference>
<dbReference type="SMR" id="Q2YQL5"/>
<dbReference type="STRING" id="359391.BAB1_1318"/>
<dbReference type="KEGG" id="bmf:BAB1_1318"/>
<dbReference type="PATRIC" id="fig|359391.11.peg.767"/>
<dbReference type="HOGENOM" id="CLU_041273_0_0_5"/>
<dbReference type="PhylomeDB" id="Q2YQL5"/>
<dbReference type="UniPathway" id="UPA00148">
    <property type="reaction ID" value="UER00227"/>
</dbReference>
<dbReference type="Proteomes" id="UP000002719">
    <property type="component" value="Chromosome I"/>
</dbReference>
<dbReference type="GO" id="GO:0043780">
    <property type="term" value="F:cobalt-precorrin-5B C1-methyltransferase activity"/>
    <property type="evidence" value="ECO:0007669"/>
    <property type="project" value="RHEA"/>
</dbReference>
<dbReference type="GO" id="GO:0019251">
    <property type="term" value="P:anaerobic cobalamin biosynthetic process"/>
    <property type="evidence" value="ECO:0007669"/>
    <property type="project" value="UniProtKB-UniRule"/>
</dbReference>
<dbReference type="GO" id="GO:0032259">
    <property type="term" value="P:methylation"/>
    <property type="evidence" value="ECO:0007669"/>
    <property type="project" value="UniProtKB-KW"/>
</dbReference>
<dbReference type="Gene3D" id="3.30.2110.10">
    <property type="entry name" value="CbiD-like"/>
    <property type="match status" value="1"/>
</dbReference>
<dbReference type="HAMAP" id="MF_00787">
    <property type="entry name" value="CbiD"/>
    <property type="match status" value="1"/>
</dbReference>
<dbReference type="InterPro" id="IPR002748">
    <property type="entry name" value="CbiD"/>
</dbReference>
<dbReference type="InterPro" id="IPR036074">
    <property type="entry name" value="CbiD_sf"/>
</dbReference>
<dbReference type="NCBIfam" id="TIGR00312">
    <property type="entry name" value="cbiD"/>
    <property type="match status" value="1"/>
</dbReference>
<dbReference type="NCBIfam" id="NF000849">
    <property type="entry name" value="PRK00075.1-1"/>
    <property type="match status" value="1"/>
</dbReference>
<dbReference type="PANTHER" id="PTHR35863">
    <property type="entry name" value="COBALT-PRECORRIN-5B C(1)-METHYLTRANSFERASE"/>
    <property type="match status" value="1"/>
</dbReference>
<dbReference type="PANTHER" id="PTHR35863:SF1">
    <property type="entry name" value="COBALT-PRECORRIN-5B C(1)-METHYLTRANSFERASE"/>
    <property type="match status" value="1"/>
</dbReference>
<dbReference type="Pfam" id="PF01888">
    <property type="entry name" value="CbiD"/>
    <property type="match status" value="1"/>
</dbReference>
<dbReference type="PIRSF" id="PIRSF026782">
    <property type="entry name" value="CbiD"/>
    <property type="match status" value="1"/>
</dbReference>
<dbReference type="SUPFAM" id="SSF111342">
    <property type="entry name" value="CbiD-like"/>
    <property type="match status" value="1"/>
</dbReference>